<reference key="1">
    <citation type="journal article" date="2011" name="J. Bacteriol.">
        <title>Comparative genomics of 28 Salmonella enterica isolates: evidence for CRISPR-mediated adaptive sublineage evolution.</title>
        <authorList>
            <person name="Fricke W.F."/>
            <person name="Mammel M.K."/>
            <person name="McDermott P.F."/>
            <person name="Tartera C."/>
            <person name="White D.G."/>
            <person name="Leclerc J.E."/>
            <person name="Ravel J."/>
            <person name="Cebula T.A."/>
        </authorList>
    </citation>
    <scope>NUCLEOTIDE SEQUENCE [LARGE SCALE GENOMIC DNA]</scope>
    <source>
        <strain>SL483</strain>
    </source>
</reference>
<comment type="function">
    <text evidence="1">Activates expression of the rhaBAD and rhaT operons.</text>
</comment>
<comment type="subunit">
    <text evidence="1">Binds DNA as a dimer.</text>
</comment>
<comment type="subcellular location">
    <subcellularLocation>
        <location evidence="1">Cytoplasm</location>
    </subcellularLocation>
</comment>
<feature type="chain" id="PRO_1000200958" description="HTH-type transcriptional activator RhaS">
    <location>
        <begin position="1"/>
        <end position="278"/>
    </location>
</feature>
<feature type="domain" description="HTH araC/xylS-type" evidence="1">
    <location>
        <begin position="174"/>
        <end position="272"/>
    </location>
</feature>
<feature type="DNA-binding region" description="H-T-H motif" evidence="1">
    <location>
        <begin position="191"/>
        <end position="212"/>
    </location>
</feature>
<feature type="DNA-binding region" description="H-T-H motif" evidence="1">
    <location>
        <begin position="239"/>
        <end position="262"/>
    </location>
</feature>
<feature type="site" description="Interaction with sigma-70" evidence="1">
    <location>
        <position position="241"/>
    </location>
</feature>
<feature type="site" description="Interaction with sigma-70" evidence="1">
    <location>
        <position position="250"/>
    </location>
</feature>
<proteinExistence type="inferred from homology"/>
<keyword id="KW-0010">Activator</keyword>
<keyword id="KW-0963">Cytoplasm</keyword>
<keyword id="KW-0238">DNA-binding</keyword>
<keyword id="KW-0677">Repeat</keyword>
<keyword id="KW-0684">Rhamnose metabolism</keyword>
<keyword id="KW-0804">Transcription</keyword>
<keyword id="KW-0805">Transcription regulation</keyword>
<protein>
    <recommendedName>
        <fullName evidence="1">HTH-type transcriptional activator RhaS</fullName>
    </recommendedName>
    <alternativeName>
        <fullName evidence="1">L-rhamnose operon regulatory protein RhaS</fullName>
    </alternativeName>
</protein>
<gene>
    <name evidence="1" type="primary">rhaS</name>
    <name type="ordered locus">SeAg_B4291</name>
</gene>
<dbReference type="EMBL" id="CP001138">
    <property type="protein sequence ID" value="ACH51902.1"/>
    <property type="molecule type" value="Genomic_DNA"/>
</dbReference>
<dbReference type="RefSeq" id="WP_000217114.1">
    <property type="nucleotide sequence ID" value="NC_011149.1"/>
</dbReference>
<dbReference type="SMR" id="B5F0M9"/>
<dbReference type="KEGG" id="sea:SeAg_B4291"/>
<dbReference type="HOGENOM" id="CLU_000445_88_5_6"/>
<dbReference type="Proteomes" id="UP000008819">
    <property type="component" value="Chromosome"/>
</dbReference>
<dbReference type="GO" id="GO:0005737">
    <property type="term" value="C:cytoplasm"/>
    <property type="evidence" value="ECO:0007669"/>
    <property type="project" value="UniProtKB-SubCell"/>
</dbReference>
<dbReference type="GO" id="GO:0003700">
    <property type="term" value="F:DNA-binding transcription factor activity"/>
    <property type="evidence" value="ECO:0007669"/>
    <property type="project" value="UniProtKB-UniRule"/>
</dbReference>
<dbReference type="GO" id="GO:0043565">
    <property type="term" value="F:sequence-specific DNA binding"/>
    <property type="evidence" value="ECO:0007669"/>
    <property type="project" value="InterPro"/>
</dbReference>
<dbReference type="GO" id="GO:0045893">
    <property type="term" value="P:positive regulation of DNA-templated transcription"/>
    <property type="evidence" value="ECO:0007669"/>
    <property type="project" value="UniProtKB-UniRule"/>
</dbReference>
<dbReference type="GO" id="GO:0019299">
    <property type="term" value="P:rhamnose metabolic process"/>
    <property type="evidence" value="ECO:0007669"/>
    <property type="project" value="UniProtKB-UniRule"/>
</dbReference>
<dbReference type="CDD" id="cd06977">
    <property type="entry name" value="cupin_RhaR_RhaS-like_N"/>
    <property type="match status" value="1"/>
</dbReference>
<dbReference type="Gene3D" id="1.10.10.60">
    <property type="entry name" value="Homeodomain-like"/>
    <property type="match status" value="1"/>
</dbReference>
<dbReference type="Gene3D" id="2.60.120.10">
    <property type="entry name" value="Jelly Rolls"/>
    <property type="match status" value="1"/>
</dbReference>
<dbReference type="HAMAP" id="MF_01534">
    <property type="entry name" value="HTH_type_RhaS"/>
    <property type="match status" value="1"/>
</dbReference>
<dbReference type="InterPro" id="IPR003313">
    <property type="entry name" value="AraC-bd"/>
</dbReference>
<dbReference type="InterPro" id="IPR050204">
    <property type="entry name" value="AraC_XylS_family_regulators"/>
</dbReference>
<dbReference type="InterPro" id="IPR009057">
    <property type="entry name" value="Homeodomain-like_sf"/>
</dbReference>
<dbReference type="InterPro" id="IPR037923">
    <property type="entry name" value="HTH-like"/>
</dbReference>
<dbReference type="InterPro" id="IPR018060">
    <property type="entry name" value="HTH_AraC"/>
</dbReference>
<dbReference type="InterPro" id="IPR018062">
    <property type="entry name" value="HTH_AraC-typ_CS"/>
</dbReference>
<dbReference type="InterPro" id="IPR047220">
    <property type="entry name" value="RhaR_RhaS-like_N"/>
</dbReference>
<dbReference type="InterPro" id="IPR014710">
    <property type="entry name" value="RmlC-like_jellyroll"/>
</dbReference>
<dbReference type="InterPro" id="IPR020449">
    <property type="entry name" value="Tscrpt_reg_AraC-type_HTH"/>
</dbReference>
<dbReference type="InterPro" id="IPR023609">
    <property type="entry name" value="Tscrpt_reg_HTH_RhaS"/>
</dbReference>
<dbReference type="NCBIfam" id="NF010028">
    <property type="entry name" value="PRK13503.1"/>
    <property type="match status" value="1"/>
</dbReference>
<dbReference type="PANTHER" id="PTHR46796:SF13">
    <property type="entry name" value="HTH-TYPE TRANSCRIPTIONAL ACTIVATOR RHAS"/>
    <property type="match status" value="1"/>
</dbReference>
<dbReference type="PANTHER" id="PTHR46796">
    <property type="entry name" value="HTH-TYPE TRANSCRIPTIONAL ACTIVATOR RHAS-RELATED"/>
    <property type="match status" value="1"/>
</dbReference>
<dbReference type="Pfam" id="PF02311">
    <property type="entry name" value="AraC_binding"/>
    <property type="match status" value="1"/>
</dbReference>
<dbReference type="Pfam" id="PF12833">
    <property type="entry name" value="HTH_18"/>
    <property type="match status" value="1"/>
</dbReference>
<dbReference type="PRINTS" id="PR00032">
    <property type="entry name" value="HTHARAC"/>
</dbReference>
<dbReference type="SMART" id="SM00342">
    <property type="entry name" value="HTH_ARAC"/>
    <property type="match status" value="1"/>
</dbReference>
<dbReference type="SUPFAM" id="SSF46689">
    <property type="entry name" value="Homeodomain-like"/>
    <property type="match status" value="2"/>
</dbReference>
<dbReference type="SUPFAM" id="SSF51215">
    <property type="entry name" value="Regulatory protein AraC"/>
    <property type="match status" value="1"/>
</dbReference>
<dbReference type="PROSITE" id="PS00041">
    <property type="entry name" value="HTH_ARAC_FAMILY_1"/>
    <property type="match status" value="1"/>
</dbReference>
<dbReference type="PROSITE" id="PS01124">
    <property type="entry name" value="HTH_ARAC_FAMILY_2"/>
    <property type="match status" value="1"/>
</dbReference>
<sequence>MTVLHSVDFFPSGKAPVAIEPRLPQAAFPEHHHDFHEIVIVEHGTGIHVFNGQPYTISGGTVCFVRDHDRHLYEHTDNLCLTNVLWRSPDAFQFLAGLDQLLPQEQDGYYPSHWRVNQSVLQQVRQLVGLMERAGDGVDAPAVANREILFMQLLVLLRRSSLMEGATNNDAKLNQLMAWLEDHFAEEVCWEAVAEQFSLSLRTLHRQLKQHTGLTPQRYLNRLRLIKARHLLRHSDHSVTEIAYRCGFGDSNHFSTLFRREFNWSPRDIRQGRDAIIQ</sequence>
<name>RHAS_SALA4</name>
<evidence type="ECO:0000255" key="1">
    <source>
        <dbReference type="HAMAP-Rule" id="MF_01534"/>
    </source>
</evidence>
<organism>
    <name type="scientific">Salmonella agona (strain SL483)</name>
    <dbReference type="NCBI Taxonomy" id="454166"/>
    <lineage>
        <taxon>Bacteria</taxon>
        <taxon>Pseudomonadati</taxon>
        <taxon>Pseudomonadota</taxon>
        <taxon>Gammaproteobacteria</taxon>
        <taxon>Enterobacterales</taxon>
        <taxon>Enterobacteriaceae</taxon>
        <taxon>Salmonella</taxon>
    </lineage>
</organism>
<accession>B5F0M9</accession>